<sequence length="535" mass="57784">MTDQTTRLPIRRALISVSDKTGILEFARELQQLGVEILSTGGTYKLLKDNGVNAVEVADYTGFAEMMDGRVKTLHPKIHGGILGRRGTDDAIMNEHGIKPIDLVAVNLYPFEATISKPGCDLPTAIENIDIGGPTMVRSAAKNHKDVAIVVNASDYAGVVEGLKAGGLTYAQRFDLMLKAFEHTAAYDGMIANYMGTIDQSKESLSTEDRSEFPRTFNSQFVKAQEMRYGENPHQSAAFYVEAKKGEASISTAIQLQGKELSFNNVADTDAALECVKSFVKPACVIVKHANPCGVAVVPEDEGGIRKAYDLAYATDTESAFGGIIAFNRELDGETAKAIVERQFVEVIIAPKISQAAREVVAAKQNVRLLECGEWPAERAAGWDFKRVNGGLLVQSRDIGMITADDLKIVTKRAPTEQEIHDLVFAWKVAKFVKSNAIVYAKNRQTIGVGAGQMSRVNSARIAAIKAEHAGLQVQGAVMASDAFFPFRDGIDNAAKVGISAVIQPGGSMRDAEVIAAADEAGIAMVFTGMRHFRH</sequence>
<organism>
    <name type="scientific">Pseudomonas entomophila (strain L48)</name>
    <dbReference type="NCBI Taxonomy" id="384676"/>
    <lineage>
        <taxon>Bacteria</taxon>
        <taxon>Pseudomonadati</taxon>
        <taxon>Pseudomonadota</taxon>
        <taxon>Gammaproteobacteria</taxon>
        <taxon>Pseudomonadales</taxon>
        <taxon>Pseudomonadaceae</taxon>
        <taxon>Pseudomonas</taxon>
    </lineage>
</organism>
<comment type="catalytic activity">
    <reaction evidence="1">
        <text>(6R)-10-formyltetrahydrofolate + 5-amino-1-(5-phospho-beta-D-ribosyl)imidazole-4-carboxamide = 5-formamido-1-(5-phospho-D-ribosyl)imidazole-4-carboxamide + (6S)-5,6,7,8-tetrahydrofolate</text>
        <dbReference type="Rhea" id="RHEA:22192"/>
        <dbReference type="ChEBI" id="CHEBI:57453"/>
        <dbReference type="ChEBI" id="CHEBI:58467"/>
        <dbReference type="ChEBI" id="CHEBI:58475"/>
        <dbReference type="ChEBI" id="CHEBI:195366"/>
        <dbReference type="EC" id="2.1.2.3"/>
    </reaction>
</comment>
<comment type="catalytic activity">
    <reaction evidence="1">
        <text>IMP + H2O = 5-formamido-1-(5-phospho-D-ribosyl)imidazole-4-carboxamide</text>
        <dbReference type="Rhea" id="RHEA:18445"/>
        <dbReference type="ChEBI" id="CHEBI:15377"/>
        <dbReference type="ChEBI" id="CHEBI:58053"/>
        <dbReference type="ChEBI" id="CHEBI:58467"/>
        <dbReference type="EC" id="3.5.4.10"/>
    </reaction>
</comment>
<comment type="pathway">
    <text evidence="1">Purine metabolism; IMP biosynthesis via de novo pathway; 5-formamido-1-(5-phospho-D-ribosyl)imidazole-4-carboxamide from 5-amino-1-(5-phospho-D-ribosyl)imidazole-4-carboxamide (10-formyl THF route): step 1/1.</text>
</comment>
<comment type="pathway">
    <text evidence="1">Purine metabolism; IMP biosynthesis via de novo pathway; IMP from 5-formamido-1-(5-phospho-D-ribosyl)imidazole-4-carboxamide: step 1/1.</text>
</comment>
<comment type="domain">
    <text evidence="1">The IMP cyclohydrolase activity resides in the N-terminal region.</text>
</comment>
<comment type="similarity">
    <text evidence="1">Belongs to the PurH family.</text>
</comment>
<protein>
    <recommendedName>
        <fullName evidence="1">Bifunctional purine biosynthesis protein PurH</fullName>
    </recommendedName>
    <domain>
        <recommendedName>
            <fullName evidence="1">Phosphoribosylaminoimidazolecarboxamide formyltransferase</fullName>
            <ecNumber evidence="1">2.1.2.3</ecNumber>
        </recommendedName>
        <alternativeName>
            <fullName evidence="1">AICAR transformylase</fullName>
        </alternativeName>
    </domain>
    <domain>
        <recommendedName>
            <fullName evidence="1">IMP cyclohydrolase</fullName>
            <ecNumber evidence="1">3.5.4.10</ecNumber>
        </recommendedName>
        <alternativeName>
            <fullName evidence="1">ATIC</fullName>
        </alternativeName>
        <alternativeName>
            <fullName evidence="1">IMP synthase</fullName>
        </alternativeName>
        <alternativeName>
            <fullName evidence="1">Inosinicase</fullName>
        </alternativeName>
    </domain>
</protein>
<name>PUR9_PSEE4</name>
<evidence type="ECO:0000255" key="1">
    <source>
        <dbReference type="HAMAP-Rule" id="MF_00139"/>
    </source>
</evidence>
<evidence type="ECO:0000255" key="2">
    <source>
        <dbReference type="PROSITE-ProRule" id="PRU01202"/>
    </source>
</evidence>
<accession>Q1I4C1</accession>
<keyword id="KW-0378">Hydrolase</keyword>
<keyword id="KW-0511">Multifunctional enzyme</keyword>
<keyword id="KW-0658">Purine biosynthesis</keyword>
<keyword id="KW-0808">Transferase</keyword>
<proteinExistence type="inferred from homology"/>
<gene>
    <name evidence="1" type="primary">purH</name>
    <name type="ordered locus">PSEEN4863</name>
</gene>
<feature type="chain" id="PRO_1000018937" description="Bifunctional purine biosynthesis protein PurH">
    <location>
        <begin position="1"/>
        <end position="535"/>
    </location>
</feature>
<feature type="domain" description="MGS-like" evidence="2">
    <location>
        <begin position="6"/>
        <end position="151"/>
    </location>
</feature>
<reference key="1">
    <citation type="journal article" date="2006" name="Nat. Biotechnol.">
        <title>Complete genome sequence of the entomopathogenic and metabolically versatile soil bacterium Pseudomonas entomophila.</title>
        <authorList>
            <person name="Vodovar N."/>
            <person name="Vallenet D."/>
            <person name="Cruveiller S."/>
            <person name="Rouy Z."/>
            <person name="Barbe V."/>
            <person name="Acosta C."/>
            <person name="Cattolico L."/>
            <person name="Jubin C."/>
            <person name="Lajus A."/>
            <person name="Segurens B."/>
            <person name="Vacherie B."/>
            <person name="Wincker P."/>
            <person name="Weissenbach J."/>
            <person name="Lemaitre B."/>
            <person name="Medigue C."/>
            <person name="Boccard F."/>
        </authorList>
    </citation>
    <scope>NUCLEOTIDE SEQUENCE [LARGE SCALE GENOMIC DNA]</scope>
    <source>
        <strain>L48</strain>
    </source>
</reference>
<dbReference type="EC" id="2.1.2.3" evidence="1"/>
<dbReference type="EC" id="3.5.4.10" evidence="1"/>
<dbReference type="EMBL" id="CT573326">
    <property type="protein sequence ID" value="CAK17515.1"/>
    <property type="molecule type" value="Genomic_DNA"/>
</dbReference>
<dbReference type="RefSeq" id="WP_011535877.1">
    <property type="nucleotide sequence ID" value="NC_008027.1"/>
</dbReference>
<dbReference type="SMR" id="Q1I4C1"/>
<dbReference type="STRING" id="384676.PSEEN4863"/>
<dbReference type="GeneID" id="32807818"/>
<dbReference type="KEGG" id="pen:PSEEN4863"/>
<dbReference type="eggNOG" id="COG0138">
    <property type="taxonomic scope" value="Bacteria"/>
</dbReference>
<dbReference type="HOGENOM" id="CLU_016316_5_2_6"/>
<dbReference type="OrthoDB" id="9802065at2"/>
<dbReference type="UniPathway" id="UPA00074">
    <property type="reaction ID" value="UER00133"/>
</dbReference>
<dbReference type="UniPathway" id="UPA00074">
    <property type="reaction ID" value="UER00135"/>
</dbReference>
<dbReference type="Proteomes" id="UP000000658">
    <property type="component" value="Chromosome"/>
</dbReference>
<dbReference type="GO" id="GO:0005829">
    <property type="term" value="C:cytosol"/>
    <property type="evidence" value="ECO:0007669"/>
    <property type="project" value="TreeGrafter"/>
</dbReference>
<dbReference type="GO" id="GO:0003937">
    <property type="term" value="F:IMP cyclohydrolase activity"/>
    <property type="evidence" value="ECO:0007669"/>
    <property type="project" value="UniProtKB-UniRule"/>
</dbReference>
<dbReference type="GO" id="GO:0004643">
    <property type="term" value="F:phosphoribosylaminoimidazolecarboxamide formyltransferase activity"/>
    <property type="evidence" value="ECO:0007669"/>
    <property type="project" value="UniProtKB-UniRule"/>
</dbReference>
<dbReference type="GO" id="GO:0006189">
    <property type="term" value="P:'de novo' IMP biosynthetic process"/>
    <property type="evidence" value="ECO:0007669"/>
    <property type="project" value="UniProtKB-UniRule"/>
</dbReference>
<dbReference type="CDD" id="cd01421">
    <property type="entry name" value="IMPCH"/>
    <property type="match status" value="1"/>
</dbReference>
<dbReference type="FunFam" id="3.40.140.20:FF:000001">
    <property type="entry name" value="Bifunctional purine biosynthesis protein PurH"/>
    <property type="match status" value="1"/>
</dbReference>
<dbReference type="FunFam" id="3.40.140.20:FF:000002">
    <property type="entry name" value="Bifunctional purine biosynthesis protein PurH"/>
    <property type="match status" value="1"/>
</dbReference>
<dbReference type="FunFam" id="3.40.50.1380:FF:000001">
    <property type="entry name" value="Bifunctional purine biosynthesis protein PurH"/>
    <property type="match status" value="1"/>
</dbReference>
<dbReference type="Gene3D" id="3.40.140.20">
    <property type="match status" value="2"/>
</dbReference>
<dbReference type="Gene3D" id="3.40.50.1380">
    <property type="entry name" value="Methylglyoxal synthase-like domain"/>
    <property type="match status" value="1"/>
</dbReference>
<dbReference type="HAMAP" id="MF_00139">
    <property type="entry name" value="PurH"/>
    <property type="match status" value="1"/>
</dbReference>
<dbReference type="InterPro" id="IPR024051">
    <property type="entry name" value="AICAR_Tfase_dup_dom_sf"/>
</dbReference>
<dbReference type="InterPro" id="IPR016193">
    <property type="entry name" value="Cytidine_deaminase-like"/>
</dbReference>
<dbReference type="InterPro" id="IPR011607">
    <property type="entry name" value="MGS-like_dom"/>
</dbReference>
<dbReference type="InterPro" id="IPR036914">
    <property type="entry name" value="MGS-like_dom_sf"/>
</dbReference>
<dbReference type="InterPro" id="IPR002695">
    <property type="entry name" value="PurH-like"/>
</dbReference>
<dbReference type="NCBIfam" id="NF002049">
    <property type="entry name" value="PRK00881.1"/>
    <property type="match status" value="1"/>
</dbReference>
<dbReference type="NCBIfam" id="TIGR00355">
    <property type="entry name" value="purH"/>
    <property type="match status" value="1"/>
</dbReference>
<dbReference type="PANTHER" id="PTHR11692:SF0">
    <property type="entry name" value="BIFUNCTIONAL PURINE BIOSYNTHESIS PROTEIN ATIC"/>
    <property type="match status" value="1"/>
</dbReference>
<dbReference type="PANTHER" id="PTHR11692">
    <property type="entry name" value="BIFUNCTIONAL PURINE BIOSYNTHESIS PROTEIN PURH"/>
    <property type="match status" value="1"/>
</dbReference>
<dbReference type="Pfam" id="PF01808">
    <property type="entry name" value="AICARFT_IMPCHas"/>
    <property type="match status" value="1"/>
</dbReference>
<dbReference type="Pfam" id="PF02142">
    <property type="entry name" value="MGS"/>
    <property type="match status" value="1"/>
</dbReference>
<dbReference type="PIRSF" id="PIRSF000414">
    <property type="entry name" value="AICARFT_IMPCHas"/>
    <property type="match status" value="1"/>
</dbReference>
<dbReference type="SMART" id="SM00798">
    <property type="entry name" value="AICARFT_IMPCHas"/>
    <property type="match status" value="1"/>
</dbReference>
<dbReference type="SMART" id="SM00851">
    <property type="entry name" value="MGS"/>
    <property type="match status" value="1"/>
</dbReference>
<dbReference type="SUPFAM" id="SSF53927">
    <property type="entry name" value="Cytidine deaminase-like"/>
    <property type="match status" value="1"/>
</dbReference>
<dbReference type="SUPFAM" id="SSF52335">
    <property type="entry name" value="Methylglyoxal synthase-like"/>
    <property type="match status" value="1"/>
</dbReference>
<dbReference type="PROSITE" id="PS51855">
    <property type="entry name" value="MGS"/>
    <property type="match status" value="1"/>
</dbReference>